<accession>B4RC55</accession>
<organism>
    <name type="scientific">Phenylobacterium zucineum (strain HLK1)</name>
    <dbReference type="NCBI Taxonomy" id="450851"/>
    <lineage>
        <taxon>Bacteria</taxon>
        <taxon>Pseudomonadati</taxon>
        <taxon>Pseudomonadota</taxon>
        <taxon>Alphaproteobacteria</taxon>
        <taxon>Caulobacterales</taxon>
        <taxon>Caulobacteraceae</taxon>
        <taxon>Phenylobacterium</taxon>
    </lineage>
</organism>
<keyword id="KW-0963">Cytoplasm</keyword>
<keyword id="KW-0342">GTP-binding</keyword>
<keyword id="KW-0396">Initiation factor</keyword>
<keyword id="KW-0547">Nucleotide-binding</keyword>
<keyword id="KW-0648">Protein biosynthesis</keyword>
<keyword id="KW-1185">Reference proteome</keyword>
<gene>
    <name evidence="2" type="primary">infB</name>
    <name type="ordered locus">PHZ_c3439</name>
</gene>
<evidence type="ECO:0000250" key="1"/>
<evidence type="ECO:0000255" key="2">
    <source>
        <dbReference type="HAMAP-Rule" id="MF_00100"/>
    </source>
</evidence>
<evidence type="ECO:0000256" key="3">
    <source>
        <dbReference type="SAM" id="MobiDB-lite"/>
    </source>
</evidence>
<proteinExistence type="inferred from homology"/>
<dbReference type="EMBL" id="CP000747">
    <property type="protein sequence ID" value="ACG79848.1"/>
    <property type="molecule type" value="Genomic_DNA"/>
</dbReference>
<dbReference type="RefSeq" id="WP_012523986.1">
    <property type="nucleotide sequence ID" value="NC_011144.1"/>
</dbReference>
<dbReference type="SMR" id="B4RC55"/>
<dbReference type="STRING" id="450851.PHZ_c3439"/>
<dbReference type="KEGG" id="pzu:PHZ_c3439"/>
<dbReference type="eggNOG" id="COG0532">
    <property type="taxonomic scope" value="Bacteria"/>
</dbReference>
<dbReference type="HOGENOM" id="CLU_006301_10_1_5"/>
<dbReference type="OrthoDB" id="9811804at2"/>
<dbReference type="Proteomes" id="UP000001868">
    <property type="component" value="Chromosome"/>
</dbReference>
<dbReference type="GO" id="GO:0005829">
    <property type="term" value="C:cytosol"/>
    <property type="evidence" value="ECO:0007669"/>
    <property type="project" value="TreeGrafter"/>
</dbReference>
<dbReference type="GO" id="GO:0005525">
    <property type="term" value="F:GTP binding"/>
    <property type="evidence" value="ECO:0007669"/>
    <property type="project" value="UniProtKB-KW"/>
</dbReference>
<dbReference type="GO" id="GO:0003924">
    <property type="term" value="F:GTPase activity"/>
    <property type="evidence" value="ECO:0007669"/>
    <property type="project" value="UniProtKB-UniRule"/>
</dbReference>
<dbReference type="GO" id="GO:0097216">
    <property type="term" value="F:guanosine tetraphosphate binding"/>
    <property type="evidence" value="ECO:0007669"/>
    <property type="project" value="UniProtKB-ARBA"/>
</dbReference>
<dbReference type="GO" id="GO:0003743">
    <property type="term" value="F:translation initiation factor activity"/>
    <property type="evidence" value="ECO:0007669"/>
    <property type="project" value="UniProtKB-UniRule"/>
</dbReference>
<dbReference type="CDD" id="cd01887">
    <property type="entry name" value="IF2_eIF5B"/>
    <property type="match status" value="1"/>
</dbReference>
<dbReference type="CDD" id="cd03702">
    <property type="entry name" value="IF2_mtIF2_II"/>
    <property type="match status" value="1"/>
</dbReference>
<dbReference type="CDD" id="cd03692">
    <property type="entry name" value="mtIF2_IVc"/>
    <property type="match status" value="1"/>
</dbReference>
<dbReference type="FunFam" id="2.40.30.10:FF:000007">
    <property type="entry name" value="Translation initiation factor IF-2"/>
    <property type="match status" value="1"/>
</dbReference>
<dbReference type="FunFam" id="2.40.30.10:FF:000008">
    <property type="entry name" value="Translation initiation factor IF-2"/>
    <property type="match status" value="1"/>
</dbReference>
<dbReference type="FunFam" id="3.40.50.10050:FF:000001">
    <property type="entry name" value="Translation initiation factor IF-2"/>
    <property type="match status" value="1"/>
</dbReference>
<dbReference type="FunFam" id="3.40.50.300:FF:000019">
    <property type="entry name" value="Translation initiation factor IF-2"/>
    <property type="match status" value="1"/>
</dbReference>
<dbReference type="Gene3D" id="3.40.50.300">
    <property type="entry name" value="P-loop containing nucleotide triphosphate hydrolases"/>
    <property type="match status" value="1"/>
</dbReference>
<dbReference type="Gene3D" id="2.40.30.10">
    <property type="entry name" value="Translation factors"/>
    <property type="match status" value="2"/>
</dbReference>
<dbReference type="Gene3D" id="3.40.50.10050">
    <property type="entry name" value="Translation initiation factor IF- 2, domain 3"/>
    <property type="match status" value="1"/>
</dbReference>
<dbReference type="HAMAP" id="MF_00100_B">
    <property type="entry name" value="IF_2_B"/>
    <property type="match status" value="1"/>
</dbReference>
<dbReference type="InterPro" id="IPR053905">
    <property type="entry name" value="EF-G-like_DII"/>
</dbReference>
<dbReference type="InterPro" id="IPR004161">
    <property type="entry name" value="EFTu-like_2"/>
</dbReference>
<dbReference type="InterPro" id="IPR013575">
    <property type="entry name" value="IF2_assoc_dom_bac"/>
</dbReference>
<dbReference type="InterPro" id="IPR044145">
    <property type="entry name" value="IF2_II"/>
</dbReference>
<dbReference type="InterPro" id="IPR006847">
    <property type="entry name" value="IF2_N"/>
</dbReference>
<dbReference type="InterPro" id="IPR027417">
    <property type="entry name" value="P-loop_NTPase"/>
</dbReference>
<dbReference type="InterPro" id="IPR005225">
    <property type="entry name" value="Small_GTP-bd"/>
</dbReference>
<dbReference type="InterPro" id="IPR000795">
    <property type="entry name" value="T_Tr_GTP-bd_dom"/>
</dbReference>
<dbReference type="InterPro" id="IPR000178">
    <property type="entry name" value="TF_IF2_bacterial-like"/>
</dbReference>
<dbReference type="InterPro" id="IPR015760">
    <property type="entry name" value="TIF_IF2"/>
</dbReference>
<dbReference type="InterPro" id="IPR023115">
    <property type="entry name" value="TIF_IF2_dom3"/>
</dbReference>
<dbReference type="InterPro" id="IPR036925">
    <property type="entry name" value="TIF_IF2_dom3_sf"/>
</dbReference>
<dbReference type="InterPro" id="IPR009000">
    <property type="entry name" value="Transl_B-barrel_sf"/>
</dbReference>
<dbReference type="NCBIfam" id="TIGR00487">
    <property type="entry name" value="IF-2"/>
    <property type="match status" value="1"/>
</dbReference>
<dbReference type="NCBIfam" id="TIGR00231">
    <property type="entry name" value="small_GTP"/>
    <property type="match status" value="1"/>
</dbReference>
<dbReference type="PANTHER" id="PTHR43381:SF5">
    <property type="entry name" value="TR-TYPE G DOMAIN-CONTAINING PROTEIN"/>
    <property type="match status" value="1"/>
</dbReference>
<dbReference type="PANTHER" id="PTHR43381">
    <property type="entry name" value="TRANSLATION INITIATION FACTOR IF-2-RELATED"/>
    <property type="match status" value="1"/>
</dbReference>
<dbReference type="Pfam" id="PF22042">
    <property type="entry name" value="EF-G_D2"/>
    <property type="match status" value="1"/>
</dbReference>
<dbReference type="Pfam" id="PF00009">
    <property type="entry name" value="GTP_EFTU"/>
    <property type="match status" value="1"/>
</dbReference>
<dbReference type="Pfam" id="PF03144">
    <property type="entry name" value="GTP_EFTU_D2"/>
    <property type="match status" value="1"/>
</dbReference>
<dbReference type="Pfam" id="PF11987">
    <property type="entry name" value="IF-2"/>
    <property type="match status" value="1"/>
</dbReference>
<dbReference type="Pfam" id="PF08364">
    <property type="entry name" value="IF2_assoc"/>
    <property type="match status" value="1"/>
</dbReference>
<dbReference type="Pfam" id="PF04760">
    <property type="entry name" value="IF2_N"/>
    <property type="match status" value="1"/>
</dbReference>
<dbReference type="SUPFAM" id="SSF52156">
    <property type="entry name" value="Initiation factor IF2/eIF5b, domain 3"/>
    <property type="match status" value="1"/>
</dbReference>
<dbReference type="SUPFAM" id="SSF52540">
    <property type="entry name" value="P-loop containing nucleoside triphosphate hydrolases"/>
    <property type="match status" value="1"/>
</dbReference>
<dbReference type="SUPFAM" id="SSF50447">
    <property type="entry name" value="Translation proteins"/>
    <property type="match status" value="2"/>
</dbReference>
<dbReference type="PROSITE" id="PS51722">
    <property type="entry name" value="G_TR_2"/>
    <property type="match status" value="1"/>
</dbReference>
<dbReference type="PROSITE" id="PS01176">
    <property type="entry name" value="IF2"/>
    <property type="match status" value="1"/>
</dbReference>
<protein>
    <recommendedName>
        <fullName evidence="2">Translation initiation factor IF-2</fullName>
    </recommendedName>
</protein>
<reference key="1">
    <citation type="journal article" date="2008" name="BMC Genomics">
        <title>Complete genome of Phenylobacterium zucineum - a novel facultative intracellular bacterium isolated from human erythroleukemia cell line K562.</title>
        <authorList>
            <person name="Luo Y."/>
            <person name="Xu X."/>
            <person name="Ding Z."/>
            <person name="Liu Z."/>
            <person name="Zhang B."/>
            <person name="Yan Z."/>
            <person name="Sun J."/>
            <person name="Hu S."/>
            <person name="Hu X."/>
        </authorList>
    </citation>
    <scope>NUCLEOTIDE SEQUENCE [LARGE SCALE GENOMIC DNA]</scope>
    <source>
        <strain>HLK1</strain>
    </source>
</reference>
<name>IF2_PHEZH</name>
<feature type="chain" id="PRO_1000093809" description="Translation initiation factor IF-2">
    <location>
        <begin position="1"/>
        <end position="994"/>
    </location>
</feature>
<feature type="domain" description="tr-type G">
    <location>
        <begin position="492"/>
        <end position="662"/>
    </location>
</feature>
<feature type="region of interest" description="Disordered" evidence="3">
    <location>
        <begin position="1"/>
        <end position="405"/>
    </location>
</feature>
<feature type="region of interest" description="G1" evidence="1">
    <location>
        <begin position="501"/>
        <end position="508"/>
    </location>
</feature>
<feature type="region of interest" description="G2" evidence="1">
    <location>
        <begin position="526"/>
        <end position="530"/>
    </location>
</feature>
<feature type="region of interest" description="G3" evidence="1">
    <location>
        <begin position="548"/>
        <end position="551"/>
    </location>
</feature>
<feature type="region of interest" description="G4" evidence="1">
    <location>
        <begin position="602"/>
        <end position="605"/>
    </location>
</feature>
<feature type="region of interest" description="G5" evidence="1">
    <location>
        <begin position="638"/>
        <end position="640"/>
    </location>
</feature>
<feature type="compositionally biased region" description="Polar residues" evidence="3">
    <location>
        <begin position="1"/>
        <end position="10"/>
    </location>
</feature>
<feature type="compositionally biased region" description="Polar residues" evidence="3">
    <location>
        <begin position="28"/>
        <end position="40"/>
    </location>
</feature>
<feature type="compositionally biased region" description="Low complexity" evidence="3">
    <location>
        <begin position="76"/>
        <end position="91"/>
    </location>
</feature>
<feature type="compositionally biased region" description="Basic and acidic residues" evidence="3">
    <location>
        <begin position="98"/>
        <end position="131"/>
    </location>
</feature>
<feature type="compositionally biased region" description="Low complexity" evidence="3">
    <location>
        <begin position="132"/>
        <end position="146"/>
    </location>
</feature>
<feature type="compositionally biased region" description="Pro residues" evidence="3">
    <location>
        <begin position="147"/>
        <end position="157"/>
    </location>
</feature>
<feature type="compositionally biased region" description="Low complexity" evidence="3">
    <location>
        <begin position="158"/>
        <end position="172"/>
    </location>
</feature>
<feature type="compositionally biased region" description="Pro residues" evidence="3">
    <location>
        <begin position="173"/>
        <end position="188"/>
    </location>
</feature>
<feature type="compositionally biased region" description="Low complexity" evidence="3">
    <location>
        <begin position="189"/>
        <end position="204"/>
    </location>
</feature>
<feature type="compositionally biased region" description="Basic and acidic residues" evidence="3">
    <location>
        <begin position="216"/>
        <end position="235"/>
    </location>
</feature>
<feature type="compositionally biased region" description="Basic and acidic residues" evidence="3">
    <location>
        <begin position="247"/>
        <end position="273"/>
    </location>
</feature>
<feature type="compositionally biased region" description="Gly residues" evidence="3">
    <location>
        <begin position="298"/>
        <end position="310"/>
    </location>
</feature>
<feature type="compositionally biased region" description="Basic and acidic residues" evidence="3">
    <location>
        <begin position="336"/>
        <end position="350"/>
    </location>
</feature>
<feature type="compositionally biased region" description="Basic and acidic residues" evidence="3">
    <location>
        <begin position="390"/>
        <end position="402"/>
    </location>
</feature>
<feature type="binding site" evidence="2">
    <location>
        <begin position="501"/>
        <end position="508"/>
    </location>
    <ligand>
        <name>GTP</name>
        <dbReference type="ChEBI" id="CHEBI:37565"/>
    </ligand>
</feature>
<feature type="binding site" evidence="2">
    <location>
        <begin position="548"/>
        <end position="552"/>
    </location>
    <ligand>
        <name>GTP</name>
        <dbReference type="ChEBI" id="CHEBI:37565"/>
    </ligand>
</feature>
<feature type="binding site" evidence="2">
    <location>
        <begin position="602"/>
        <end position="605"/>
    </location>
    <ligand>
        <name>GTP</name>
        <dbReference type="ChEBI" id="CHEBI:37565"/>
    </ligand>
</feature>
<comment type="function">
    <text evidence="2">One of the essential components for the initiation of protein synthesis. Protects formylmethionyl-tRNA from spontaneous hydrolysis and promotes its binding to the 30S ribosomal subunits. Also involved in the hydrolysis of GTP during the formation of the 70S ribosomal complex.</text>
</comment>
<comment type="subcellular location">
    <subcellularLocation>
        <location evidence="2">Cytoplasm</location>
    </subcellularLocation>
</comment>
<comment type="similarity">
    <text evidence="2">Belongs to the TRAFAC class translation factor GTPase superfamily. Classic translation factor GTPase family. IF-2 subfamily.</text>
</comment>
<sequence>MSDENNNGRNSAPGGRQPLTLKPRAAGSVSSGTVKQSFSHGRTKTVVVETKRARTHAPAGGNLAAPSAAERRVFEPQKPAGPAQAPRAPQGAGDGLSAEERAARQRAIELARQQEADRRAREERARAEAEAARAAQQKAAQAAAEPPAAPPPAPAAPPAAAAPAAPAAEAAPAPKPAPSPRPVPPSAPAPQAARPAAEAPPRQAGAGQTRTYQPSPDRRDDRPSTTTYRPERPSNRFDTSTFNQRAPRRDDDRGPRPPRRDDDRGPRRDDRPQGARPEGGGTVRYSALAPRPAPGGPRGPGGPRGPGGPRIGAAAPPATPEIQRAARQAPRPGMGVDRRPDEDDRRRDPGKAISRAKGAPNRREGRLTIQAVAGDADGAERMRSLASVRRAREREREKRKGGAQEQARVAREVVIPDVITVGELANRMATRGVEVIKFLMRQGVMLKINDVIDNDTAELVATEFGHTVKRVSEADVEEGFIGAEDVDDHLLPRPPVVAVMGHVDHGKTSLLDALRSTDVVSGEHGGITQHIGAYQVRLADGQRVTFLDTPGHAAFSAMRMRGANVTDIVILVVAADDGVMPQTVEAIQHAKAAGAPIIVAINKIDKPDADPTRVINELLQHEIVVESLGGETQAVEVSATQKMGLDDLIENILLQAEVLDLKANPDRTADGSVIEAKLDKGRGAVATVLVKRGTLKRGDIVVAGSSWGRVRALLNERGEQLQEATPSTPVEILGLDGTPDPGEPFAVVENEARARELTEYRQRVKREKAGAPVASASLADMMAKLADKKVSELPVIIKADVQGSAEAIVGSLDKLATDEVRARIILSGAGAINESDVLLAKGAGAPILGFNVRASKQARDLAEREGVEIRYYAIIYDLIDDIKGVLSGMLAPIQRETFLGNAEVLQAFDITKVGRVAGCRVTEGVVRKGARVRIVREDVVILELGVLKTLKRFKDEVNEVQAGQECGMAFEGFQDIKAGDVIECFNLEEVKRSL</sequence>